<gene>
    <name type="ordered locus">YCR016W</name>
    <name type="ORF">YCR16W</name>
</gene>
<comment type="miscellaneous">
    <text evidence="2">Present with 1850 molecules/cell in log phase SD medium.</text>
</comment>
<sequence length="290" mass="33593">MSENHVPAWKRIALKRQTISSGDESKEKGQSNLIDDDPLNITTHLSTGNLTKKEKKRIINGESKSSTKKGKRVSKPGTKKKEKLSKDEKNSKKNKILKDQLRYLIEFFRTKSESKFPTGILELESVKENYGDSLIKDEPSESGVVEVWKFSKQKQNWLIKHFFNLDEIPSVYNDLLLLYFRDLQGKSKEELISKCKGKLKQWNDYVEDQETKIKALIAEDKASEPINGEEKEEGEKDGNAEQGKQKEVQDEQEEVQMPNKELVQRSLKLLEIWKNDDSEQIELKNFFVDV</sequence>
<organism>
    <name type="scientific">Saccharomyces cerevisiae (strain ATCC 204508 / S288c)</name>
    <name type="common">Baker's yeast</name>
    <dbReference type="NCBI Taxonomy" id="559292"/>
    <lineage>
        <taxon>Eukaryota</taxon>
        <taxon>Fungi</taxon>
        <taxon>Dikarya</taxon>
        <taxon>Ascomycota</taxon>
        <taxon>Saccharomycotina</taxon>
        <taxon>Saccharomycetes</taxon>
        <taxon>Saccharomycetales</taxon>
        <taxon>Saccharomycetaceae</taxon>
        <taxon>Saccharomyces</taxon>
    </lineage>
</organism>
<keyword id="KW-1185">Reference proteome</keyword>
<reference key="1">
    <citation type="journal article" date="1992" name="Nature">
        <title>The complete DNA sequence of yeast chromosome III.</title>
        <authorList>
            <person name="Oliver S.G."/>
            <person name="van der Aart Q.J.M."/>
            <person name="Agostoni-Carbone M.L."/>
            <person name="Aigle M."/>
            <person name="Alberghina L."/>
            <person name="Alexandraki D."/>
            <person name="Antoine G."/>
            <person name="Anwar R."/>
            <person name="Ballesta J.P.G."/>
            <person name="Benit P."/>
            <person name="Berben G."/>
            <person name="Bergantino E."/>
            <person name="Biteau N."/>
            <person name="Bolle P.-A."/>
            <person name="Bolotin-Fukuhara M."/>
            <person name="Brown A."/>
            <person name="Brown A.J.P."/>
            <person name="Buhler J.-M."/>
            <person name="Carcano C."/>
            <person name="Carignani G."/>
            <person name="Cederberg H."/>
            <person name="Chanet R."/>
            <person name="Contreras R."/>
            <person name="Crouzet M."/>
            <person name="Daignan-Fornier B."/>
            <person name="Defoor E."/>
            <person name="Delgado M.D."/>
            <person name="Demolder J."/>
            <person name="Doira C."/>
            <person name="Dubois E."/>
            <person name="Dujon B."/>
            <person name="Duesterhoeft A."/>
            <person name="Erdmann D."/>
            <person name="Esteban M."/>
            <person name="Fabre F."/>
            <person name="Fairhead C."/>
            <person name="Faye G."/>
            <person name="Feldmann H."/>
            <person name="Fiers W."/>
            <person name="Francingues-Gaillard M.-C."/>
            <person name="Franco L."/>
            <person name="Frontali L."/>
            <person name="Fukuhara H."/>
            <person name="Fuller L.J."/>
            <person name="Galland P."/>
            <person name="Gent M.E."/>
            <person name="Gigot D."/>
            <person name="Gilliquet V."/>
            <person name="Glansdorff N."/>
            <person name="Goffeau A."/>
            <person name="Grenson M."/>
            <person name="Grisanti P."/>
            <person name="Grivell L.A."/>
            <person name="de Haan M."/>
            <person name="Haasemann M."/>
            <person name="Hatat D."/>
            <person name="Hoenicka J."/>
            <person name="Hegemann J.H."/>
            <person name="Herbert C.J."/>
            <person name="Hilger F."/>
            <person name="Hohmann S."/>
            <person name="Hollenberg C.P."/>
            <person name="Huse K."/>
            <person name="Iborra F."/>
            <person name="Indge K.J."/>
            <person name="Isono K."/>
            <person name="Jacq C."/>
            <person name="Jacquet M."/>
            <person name="James C.M."/>
            <person name="Jauniaux J.-C."/>
            <person name="Jia Y."/>
            <person name="Jimenez A."/>
            <person name="Kelly A."/>
            <person name="Kleinhans U."/>
            <person name="Kreisl P."/>
            <person name="Lanfranchi G."/>
            <person name="Lewis C."/>
            <person name="van der Linden C.G."/>
            <person name="Lucchini G."/>
            <person name="Lutzenkirchen K."/>
            <person name="Maat M.J."/>
            <person name="Mallet L."/>
            <person name="Mannhaupt G."/>
            <person name="Martegani E."/>
            <person name="Mathieu A."/>
            <person name="Maurer C.T.C."/>
            <person name="McConnell D."/>
            <person name="McKee R.A."/>
            <person name="Messenguy F."/>
            <person name="Mewes H.-W."/>
            <person name="Molemans F."/>
            <person name="Montague M.A."/>
            <person name="Muzi Falconi M."/>
            <person name="Navas L."/>
            <person name="Newlon C.S."/>
            <person name="Noone D."/>
            <person name="Pallier C."/>
            <person name="Panzeri L."/>
            <person name="Pearson B.M."/>
            <person name="Perea J."/>
            <person name="Philippsen P."/>
            <person name="Pierard A."/>
            <person name="Planta R.J."/>
            <person name="Plevani P."/>
            <person name="Poetsch B."/>
            <person name="Pohl F.M."/>
            <person name="Purnelle B."/>
            <person name="Ramezani Rad M."/>
            <person name="Rasmussen S.W."/>
            <person name="Raynal A."/>
            <person name="Remacha M.A."/>
            <person name="Richterich P."/>
            <person name="Roberts A.B."/>
            <person name="Rodriguez F."/>
            <person name="Sanz E."/>
            <person name="Schaaff-Gerstenschlaeger I."/>
            <person name="Scherens B."/>
            <person name="Schweitzer B."/>
            <person name="Shu Y."/>
            <person name="Skala J."/>
            <person name="Slonimski P.P."/>
            <person name="Sor F."/>
            <person name="Soustelle C."/>
            <person name="Spiegelberg R."/>
            <person name="Stateva L.I."/>
            <person name="Steensma H.Y."/>
            <person name="Steiner S."/>
            <person name="Thierry A."/>
            <person name="Thireos G."/>
            <person name="Tzermia M."/>
            <person name="Urrestarazu L.A."/>
            <person name="Valle G."/>
            <person name="Vetter I."/>
            <person name="van Vliet-Reedijk J.C."/>
            <person name="Voet M."/>
            <person name="Volckaert G."/>
            <person name="Vreken P."/>
            <person name="Wang H."/>
            <person name="Warmington J.R."/>
            <person name="von Wettstein D."/>
            <person name="Wicksteed B.L."/>
            <person name="Wilson C."/>
            <person name="Wurst H."/>
            <person name="Xu G."/>
            <person name="Yoshikawa A."/>
            <person name="Zimmermann F.K."/>
            <person name="Sgouros J.G."/>
        </authorList>
    </citation>
    <scope>NUCLEOTIDE SEQUENCE [LARGE SCALE GENOMIC DNA]</scope>
    <source>
        <strain>ATCC 204508 / S288c</strain>
    </source>
</reference>
<reference key="2">
    <citation type="submission" date="2001-06" db="EMBL/GenBank/DDBJ databases">
        <authorList>
            <person name="Valles G."/>
            <person name="Volckaerts G."/>
        </authorList>
    </citation>
    <scope>SEQUENCE REVISION TO 212</scope>
</reference>
<reference key="3">
    <citation type="journal article" date="2014" name="G3 (Bethesda)">
        <title>The reference genome sequence of Saccharomyces cerevisiae: Then and now.</title>
        <authorList>
            <person name="Engel S.R."/>
            <person name="Dietrich F.S."/>
            <person name="Fisk D.G."/>
            <person name="Binkley G."/>
            <person name="Balakrishnan R."/>
            <person name="Costanzo M.C."/>
            <person name="Dwight S.S."/>
            <person name="Hitz B.C."/>
            <person name="Karra K."/>
            <person name="Nash R.S."/>
            <person name="Weng S."/>
            <person name="Wong E.D."/>
            <person name="Lloyd P."/>
            <person name="Skrzypek M.S."/>
            <person name="Miyasato S.R."/>
            <person name="Simison M."/>
            <person name="Cherry J.M."/>
        </authorList>
    </citation>
    <scope>GENOME REANNOTATION</scope>
    <source>
        <strain>ATCC 204508 / S288c</strain>
    </source>
</reference>
<reference key="4">
    <citation type="journal article" date="2007" name="Genome Res.">
        <title>Approaching a complete repository of sequence-verified protein-encoding clones for Saccharomyces cerevisiae.</title>
        <authorList>
            <person name="Hu Y."/>
            <person name="Rolfs A."/>
            <person name="Bhullar B."/>
            <person name="Murthy T.V.S."/>
            <person name="Zhu C."/>
            <person name="Berger M.F."/>
            <person name="Camargo A.A."/>
            <person name="Kelley F."/>
            <person name="McCarron S."/>
            <person name="Jepson D."/>
            <person name="Richardson A."/>
            <person name="Raphael J."/>
            <person name="Moreira D."/>
            <person name="Taycher E."/>
            <person name="Zuo D."/>
            <person name="Mohr S."/>
            <person name="Kane M.F."/>
            <person name="Williamson J."/>
            <person name="Simpson A.J.G."/>
            <person name="Bulyk M.L."/>
            <person name="Harlow E."/>
            <person name="Marsischky G."/>
            <person name="Kolodner R.D."/>
            <person name="LaBaer J."/>
        </authorList>
    </citation>
    <scope>NUCLEOTIDE SEQUENCE [GENOMIC DNA]</scope>
    <source>
        <strain>ATCC 204508 / S288c</strain>
    </source>
</reference>
<reference key="5">
    <citation type="journal article" date="2003" name="Nature">
        <title>Global analysis of protein expression in yeast.</title>
        <authorList>
            <person name="Ghaemmaghami S."/>
            <person name="Huh W.-K."/>
            <person name="Bower K."/>
            <person name="Howson R.W."/>
            <person name="Belle A."/>
            <person name="Dephoure N."/>
            <person name="O'Shea E.K."/>
            <person name="Weissman J.S."/>
        </authorList>
    </citation>
    <scope>LEVEL OF PROTEIN EXPRESSION [LARGE SCALE ANALYSIS]</scope>
</reference>
<protein>
    <recommendedName>
        <fullName>Uncharacterized protein YCR016W</fullName>
    </recommendedName>
</protein>
<dbReference type="EMBL" id="X59720">
    <property type="protein sequence ID" value="CAC42971.1"/>
    <property type="molecule type" value="Genomic_DNA"/>
</dbReference>
<dbReference type="EMBL" id="AY692612">
    <property type="protein sequence ID" value="AAT92631.1"/>
    <property type="molecule type" value="Genomic_DNA"/>
</dbReference>
<dbReference type="EMBL" id="BK006937">
    <property type="protein sequence ID" value="DAA07493.1"/>
    <property type="molecule type" value="Genomic_DNA"/>
</dbReference>
<dbReference type="PIR" id="S19426">
    <property type="entry name" value="S19426"/>
</dbReference>
<dbReference type="SMR" id="P25617"/>
<dbReference type="BioGRID" id="30995">
    <property type="interactions" value="298"/>
</dbReference>
<dbReference type="DIP" id="DIP-4766N"/>
<dbReference type="FunCoup" id="P25617">
    <property type="interactions" value="258"/>
</dbReference>
<dbReference type="IntAct" id="P25617">
    <property type="interactions" value="26"/>
</dbReference>
<dbReference type="MINT" id="P25617"/>
<dbReference type="STRING" id="4932.YCR016W"/>
<dbReference type="iPTMnet" id="P25617"/>
<dbReference type="PaxDb" id="4932-YCR016W"/>
<dbReference type="PeptideAtlas" id="P25617"/>
<dbReference type="EnsemblFungi" id="YCR016W_mRNA">
    <property type="protein sequence ID" value="YCR016W"/>
    <property type="gene ID" value="YCR016W"/>
</dbReference>
<dbReference type="KEGG" id="sce:YCR016W"/>
<dbReference type="AGR" id="SGD:S000000609"/>
<dbReference type="SGD" id="S000000609">
    <property type="gene designation" value="YCR016W"/>
</dbReference>
<dbReference type="VEuPathDB" id="FungiDB:YCR016W"/>
<dbReference type="eggNOG" id="KOG4829">
    <property type="taxonomic scope" value="Eukaryota"/>
</dbReference>
<dbReference type="HOGENOM" id="CLU_086740_0_0_1"/>
<dbReference type="InParanoid" id="P25617"/>
<dbReference type="OMA" id="ISKWNTQ"/>
<dbReference type="OrthoDB" id="10261563at2759"/>
<dbReference type="BioCyc" id="YEAST:G3O-29331-MONOMER"/>
<dbReference type="BioGRID-ORCS" id="850375">
    <property type="hits" value="0 hits in 10 CRISPR screens"/>
</dbReference>
<dbReference type="PRO" id="PR:P25617"/>
<dbReference type="Proteomes" id="UP000002311">
    <property type="component" value="Chromosome III"/>
</dbReference>
<dbReference type="RNAct" id="P25617">
    <property type="molecule type" value="protein"/>
</dbReference>
<dbReference type="GO" id="GO:0005730">
    <property type="term" value="C:nucleolus"/>
    <property type="evidence" value="ECO:0000314"/>
    <property type="project" value="SGD"/>
</dbReference>
<dbReference type="GO" id="GO:0005634">
    <property type="term" value="C:nucleus"/>
    <property type="evidence" value="ECO:0007005"/>
    <property type="project" value="SGD"/>
</dbReference>
<dbReference type="GO" id="GO:0003723">
    <property type="term" value="F:RNA binding"/>
    <property type="evidence" value="ECO:0000314"/>
    <property type="project" value="SGD"/>
</dbReference>
<dbReference type="GO" id="GO:0000470">
    <property type="term" value="P:maturation of LSU-rRNA"/>
    <property type="evidence" value="ECO:0000315"/>
    <property type="project" value="SGD"/>
</dbReference>
<dbReference type="GO" id="GO:0042273">
    <property type="term" value="P:ribosomal large subunit biogenesis"/>
    <property type="evidence" value="ECO:0000315"/>
    <property type="project" value="SGD"/>
</dbReference>
<dbReference type="InterPro" id="IPR019327">
    <property type="entry name" value="WKF"/>
</dbReference>
<dbReference type="PANTHER" id="PTHR22306">
    <property type="entry name" value="CHROMOSOME 7 OPEN READING FRAME 50"/>
    <property type="match status" value="1"/>
</dbReference>
<dbReference type="PANTHER" id="PTHR22306:SF2">
    <property type="entry name" value="CHROMOSOME 7 OPEN READING FRAME 50"/>
    <property type="match status" value="1"/>
</dbReference>
<dbReference type="Pfam" id="PF10180">
    <property type="entry name" value="WKF"/>
    <property type="match status" value="1"/>
</dbReference>
<name>YCQ6_YEAST</name>
<feature type="chain" id="PRO_0000202563" description="Uncharacterized protein YCR016W">
    <location>
        <begin position="1"/>
        <end position="290"/>
    </location>
</feature>
<feature type="region of interest" description="Disordered" evidence="1">
    <location>
        <begin position="17"/>
        <end position="91"/>
    </location>
</feature>
<feature type="region of interest" description="Disordered" evidence="1">
    <location>
        <begin position="220"/>
        <end position="259"/>
    </location>
</feature>
<feature type="compositionally biased region" description="Polar residues" evidence="1">
    <location>
        <begin position="40"/>
        <end position="50"/>
    </location>
</feature>
<feature type="compositionally biased region" description="Basic residues" evidence="1">
    <location>
        <begin position="66"/>
        <end position="83"/>
    </location>
</feature>
<feature type="compositionally biased region" description="Basic and acidic residues" evidence="1">
    <location>
        <begin position="233"/>
        <end position="249"/>
    </location>
</feature>
<proteinExistence type="evidence at protein level"/>
<evidence type="ECO:0000256" key="1">
    <source>
        <dbReference type="SAM" id="MobiDB-lite"/>
    </source>
</evidence>
<evidence type="ECO:0000269" key="2">
    <source>
    </source>
</evidence>
<accession>P25617</accession>
<accession>D6VR24</accession>
<accession>Q8NIM2</accession>